<protein>
    <recommendedName>
        <fullName>Metallo-beta-lactamase domain-containing protein 1</fullName>
        <ecNumber evidence="1">3.1.27.-</ecNumber>
    </recommendedName>
    <alternativeName>
        <fullName evidence="1">Endoribonuclease MBLAC1</fullName>
    </alternativeName>
</protein>
<name>MBLC1_RAT</name>
<reference key="1">
    <citation type="journal article" date="2004" name="Genome Res.">
        <title>The status, quality, and expansion of the NIH full-length cDNA project: the Mammalian Gene Collection (MGC).</title>
        <authorList>
            <consortium name="The MGC Project Team"/>
        </authorList>
    </citation>
    <scope>NUCLEOTIDE SEQUENCE [LARGE SCALE MRNA]</scope>
    <source>
        <tissue>Lung</tissue>
    </source>
</reference>
<organism>
    <name type="scientific">Rattus norvegicus</name>
    <name type="common">Rat</name>
    <dbReference type="NCBI Taxonomy" id="10116"/>
    <lineage>
        <taxon>Eukaryota</taxon>
        <taxon>Metazoa</taxon>
        <taxon>Chordata</taxon>
        <taxon>Craniata</taxon>
        <taxon>Vertebrata</taxon>
        <taxon>Euteleostomi</taxon>
        <taxon>Mammalia</taxon>
        <taxon>Eutheria</taxon>
        <taxon>Euarchontoglires</taxon>
        <taxon>Glires</taxon>
        <taxon>Rodentia</taxon>
        <taxon>Myomorpha</taxon>
        <taxon>Muroidea</taxon>
        <taxon>Muridae</taxon>
        <taxon>Murinae</taxon>
        <taxon>Rattus</taxon>
    </lineage>
</organism>
<keyword id="KW-0963">Cytoplasm</keyword>
<keyword id="KW-0378">Hydrolase</keyword>
<keyword id="KW-0479">Metal-binding</keyword>
<keyword id="KW-0539">Nucleus</keyword>
<keyword id="KW-1185">Reference proteome</keyword>
<keyword id="KW-0862">Zinc</keyword>
<comment type="function">
    <text evidence="1">Endoribonuclease that catalyzes the hydrolysis of histone-coding pre-mRNA 3'-end. Involved in histone pre-mRNA processing during the S-phase of the cell cycle, which is required for entering/progressing through S-phase. Cleaves histone pre-mRNA at a major and a minor cleavage site after the 5'-ACCCA-3' and the 5'-ACCCACA-3' sequence, respectively, and located downstream of the stem-loop. May require the presence of the HDE element located at the histone pre-RNA 3'-end to avoid non-specific cleavage.</text>
</comment>
<comment type="catalytic activity">
    <reaction evidence="1">
        <text>a ribonucleotidyl-ribonucleotide-RNA + H2O = a 3'-end ribonucleotide-RNA + a 5'-end 5'-phospho-ribonucleoside-RNA + H(+)</text>
        <dbReference type="Rhea" id="RHEA:68096"/>
        <dbReference type="Rhea" id="RHEA-COMP:15179"/>
        <dbReference type="Rhea" id="RHEA-COMP:17355"/>
        <dbReference type="Rhea" id="RHEA-COMP:17428"/>
        <dbReference type="ChEBI" id="CHEBI:15377"/>
        <dbReference type="ChEBI" id="CHEBI:15378"/>
        <dbReference type="ChEBI" id="CHEBI:74896"/>
        <dbReference type="ChEBI" id="CHEBI:138282"/>
        <dbReference type="ChEBI" id="CHEBI:173118"/>
    </reaction>
    <physiologicalReaction direction="left-to-right" evidence="1">
        <dbReference type="Rhea" id="RHEA:68097"/>
    </physiologicalReaction>
</comment>
<comment type="cofactor">
    <cofactor evidence="1">
        <name>Zn(2+)</name>
        <dbReference type="ChEBI" id="CHEBI:29105"/>
    </cofactor>
    <text evidence="1">Binds 2 Zn(2+) ions per subunit.</text>
</comment>
<comment type="subunit">
    <text evidence="1">Homodimer.</text>
</comment>
<comment type="subcellular location">
    <subcellularLocation>
        <location evidence="1">Cytoplasm</location>
        <location evidence="1">Cytosol</location>
    </subcellularLocation>
    <subcellularLocation>
        <location evidence="1">Nucleus</location>
    </subcellularLocation>
    <text evidence="1">Localizes in the nucleus during early S-phase of the cell cycle.</text>
</comment>
<comment type="domain">
    <text evidence="1">Contains four of the five characteristic MBL-fold metal-binding motifs, with two waters completing metal coordination.</text>
</comment>
<comment type="similarity">
    <text evidence="2">Belongs to the metallo-beta-lactamase superfamily. Glyoxalase II family.</text>
</comment>
<gene>
    <name type="primary">Mblac1</name>
</gene>
<feature type="chain" id="PRO_0000337029" description="Metallo-beta-lactamase domain-containing protein 1">
    <location>
        <begin position="1"/>
        <end position="251"/>
    </location>
</feature>
<feature type="binding site" evidence="1">
    <location>
        <position position="118"/>
    </location>
    <ligand>
        <name>Zn(2+)</name>
        <dbReference type="ChEBI" id="CHEBI:29105"/>
        <label>1</label>
    </ligand>
</feature>
<feature type="binding site" evidence="1">
    <location>
        <position position="120"/>
    </location>
    <ligand>
        <name>Zn(2+)</name>
        <dbReference type="ChEBI" id="CHEBI:29105"/>
        <label>1</label>
    </ligand>
</feature>
<feature type="binding site" evidence="1">
    <location>
        <position position="122"/>
    </location>
    <ligand>
        <name>Zn(2+)</name>
        <dbReference type="ChEBI" id="CHEBI:29105"/>
        <label>2</label>
    </ligand>
</feature>
<feature type="binding site" evidence="1">
    <location>
        <position position="123"/>
    </location>
    <ligand>
        <name>Zn(2+)</name>
        <dbReference type="ChEBI" id="CHEBI:29105"/>
        <label>2</label>
    </ligand>
</feature>
<feature type="binding site" evidence="1">
    <location>
        <position position="173"/>
    </location>
    <ligand>
        <name>Zn(2+)</name>
        <dbReference type="ChEBI" id="CHEBI:29105"/>
        <label>1</label>
    </ligand>
</feature>
<feature type="binding site" evidence="1">
    <location>
        <position position="196"/>
    </location>
    <ligand>
        <name>Zn(2+)</name>
        <dbReference type="ChEBI" id="CHEBI:29105"/>
        <label>1</label>
    </ligand>
</feature>
<feature type="binding site" evidence="1">
    <location>
        <position position="196"/>
    </location>
    <ligand>
        <name>Zn(2+)</name>
        <dbReference type="ChEBI" id="CHEBI:29105"/>
        <label>2</label>
    </ligand>
</feature>
<feature type="binding site" evidence="1">
    <location>
        <position position="235"/>
    </location>
    <ligand>
        <name>Zn(2+)</name>
        <dbReference type="ChEBI" id="CHEBI:29105"/>
        <label>2</label>
    </ligand>
</feature>
<accession>Q6AYD1</accession>
<proteinExistence type="evidence at transcript level"/>
<sequence>MSGPVRTEPLHGETPLLASSGSYSVVVLLRGYAEPQGVGDAVRADGTVTLVLPRGWVSDTSRRLAPSADGGAKTALEEAVRGPILVDTGGPWTRDALLEALATQGVAPGDVTLVVGTHGHSDHIGNLGLFPQAALLVSHDFCLPGGLYLPHGLCETQPLILGSGLQVWATPGHGGQRDVSVVVEGTSLGTVVVVGDVFERLGDEDSWQDLSEDPVAQQRSRERILSVADVVVPGHGAPFRVVREAVKSSED</sequence>
<dbReference type="EC" id="3.1.27.-" evidence="1"/>
<dbReference type="EMBL" id="BC079097">
    <property type="protein sequence ID" value="AAH79097.1"/>
    <property type="molecule type" value="mRNA"/>
</dbReference>
<dbReference type="RefSeq" id="NP_001020167.1">
    <property type="nucleotide sequence ID" value="NM_001024996.1"/>
</dbReference>
<dbReference type="SMR" id="Q6AYD1"/>
<dbReference type="FunCoup" id="Q6AYD1">
    <property type="interactions" value="524"/>
</dbReference>
<dbReference type="STRING" id="10116.ENSRNOP00000001831"/>
<dbReference type="PhosphoSitePlus" id="Q6AYD1"/>
<dbReference type="jPOST" id="Q6AYD1"/>
<dbReference type="PaxDb" id="10116-ENSRNOP00000001831"/>
<dbReference type="GeneID" id="304346"/>
<dbReference type="KEGG" id="rno:304346"/>
<dbReference type="UCSC" id="RGD:1306932">
    <property type="organism name" value="rat"/>
</dbReference>
<dbReference type="AGR" id="RGD:1306932"/>
<dbReference type="CTD" id="255374"/>
<dbReference type="RGD" id="1306932">
    <property type="gene designation" value="Mblac1"/>
</dbReference>
<dbReference type="eggNOG" id="KOG4736">
    <property type="taxonomic scope" value="Eukaryota"/>
</dbReference>
<dbReference type="HOGENOM" id="CLU_030571_2_6_1"/>
<dbReference type="InParanoid" id="Q6AYD1"/>
<dbReference type="OrthoDB" id="10250730at2759"/>
<dbReference type="PhylomeDB" id="Q6AYD1"/>
<dbReference type="TreeFam" id="TF316508"/>
<dbReference type="PRO" id="PR:Q6AYD1"/>
<dbReference type="Proteomes" id="UP000002494">
    <property type="component" value="Chromosome 12"/>
</dbReference>
<dbReference type="Bgee" id="ENSRNOG00000001357">
    <property type="expression patterns" value="Expressed in pancreas and 20 other cell types or tissues"/>
</dbReference>
<dbReference type="GO" id="GO:0005737">
    <property type="term" value="C:cytoplasm"/>
    <property type="evidence" value="ECO:0000250"/>
    <property type="project" value="UniProtKB"/>
</dbReference>
<dbReference type="GO" id="GO:0005829">
    <property type="term" value="C:cytosol"/>
    <property type="evidence" value="ECO:0007669"/>
    <property type="project" value="UniProtKB-SubCell"/>
</dbReference>
<dbReference type="GO" id="GO:0005634">
    <property type="term" value="C:nucleus"/>
    <property type="evidence" value="ECO:0000250"/>
    <property type="project" value="UniProtKB"/>
</dbReference>
<dbReference type="GO" id="GO:0046872">
    <property type="term" value="F:metal ion binding"/>
    <property type="evidence" value="ECO:0000250"/>
    <property type="project" value="UniProtKB"/>
</dbReference>
<dbReference type="GO" id="GO:0004521">
    <property type="term" value="F:RNA endonuclease activity"/>
    <property type="evidence" value="ECO:0000250"/>
    <property type="project" value="UniProtKB"/>
</dbReference>
<dbReference type="GO" id="GO:0008334">
    <property type="term" value="P:histone mRNA metabolic process"/>
    <property type="evidence" value="ECO:0000250"/>
    <property type="project" value="UniProtKB"/>
</dbReference>
<dbReference type="GO" id="GO:0031124">
    <property type="term" value="P:mRNA 3'-end processing"/>
    <property type="evidence" value="ECO:0000266"/>
    <property type="project" value="RGD"/>
</dbReference>
<dbReference type="GO" id="GO:1900087">
    <property type="term" value="P:positive regulation of G1/S transition of mitotic cell cycle"/>
    <property type="evidence" value="ECO:0000250"/>
    <property type="project" value="UniProtKB"/>
</dbReference>
<dbReference type="CDD" id="cd07711">
    <property type="entry name" value="MBLAC1-like_MBL-fold"/>
    <property type="match status" value="1"/>
</dbReference>
<dbReference type="Gene3D" id="3.60.15.10">
    <property type="entry name" value="Ribonuclease Z/Hydroxyacylglutathione hydrolase-like"/>
    <property type="match status" value="1"/>
</dbReference>
<dbReference type="InterPro" id="IPR039344">
    <property type="entry name" value="MBLAC1"/>
</dbReference>
<dbReference type="InterPro" id="IPR001279">
    <property type="entry name" value="Metallo-B-lactamas"/>
</dbReference>
<dbReference type="InterPro" id="IPR036866">
    <property type="entry name" value="RibonucZ/Hydroxyglut_hydro"/>
</dbReference>
<dbReference type="PANTHER" id="PTHR23200">
    <property type="entry name" value="METALLO-BETA-LACTAMASE DOMAIN-CONTAINING PROTEIN 1"/>
    <property type="match status" value="1"/>
</dbReference>
<dbReference type="PANTHER" id="PTHR23200:SF48">
    <property type="entry name" value="METALLO-BETA-LACTAMASE DOMAIN-CONTAINING PROTEIN 1"/>
    <property type="match status" value="1"/>
</dbReference>
<dbReference type="Pfam" id="PF00753">
    <property type="entry name" value="Lactamase_B"/>
    <property type="match status" value="1"/>
</dbReference>
<dbReference type="SMART" id="SM00849">
    <property type="entry name" value="Lactamase_B"/>
    <property type="match status" value="1"/>
</dbReference>
<dbReference type="SUPFAM" id="SSF56281">
    <property type="entry name" value="Metallo-hydrolase/oxidoreductase"/>
    <property type="match status" value="1"/>
</dbReference>
<evidence type="ECO:0000250" key="1">
    <source>
        <dbReference type="UniProtKB" id="A4D2B0"/>
    </source>
</evidence>
<evidence type="ECO:0000305" key="2"/>